<protein>
    <recommendedName>
        <fullName evidence="1">DNA-directed RNA polymerase subunit beta'</fullName>
        <shortName evidence="1">RNAP subunit beta'</shortName>
        <ecNumber evidence="1">2.7.7.6</ecNumber>
    </recommendedName>
    <alternativeName>
        <fullName evidence="1">RNA polymerase subunit beta'</fullName>
    </alternativeName>
    <alternativeName>
        <fullName evidence="1">Transcriptase subunit beta'</fullName>
    </alternativeName>
</protein>
<gene>
    <name evidence="1" type="primary">rpoC</name>
    <name type="ordered locus">ECH_0951</name>
</gene>
<keyword id="KW-0240">DNA-directed RNA polymerase</keyword>
<keyword id="KW-0460">Magnesium</keyword>
<keyword id="KW-0479">Metal-binding</keyword>
<keyword id="KW-0548">Nucleotidyltransferase</keyword>
<keyword id="KW-1185">Reference proteome</keyword>
<keyword id="KW-0804">Transcription</keyword>
<keyword id="KW-0808">Transferase</keyword>
<keyword id="KW-0862">Zinc</keyword>
<dbReference type="EC" id="2.7.7.6" evidence="1"/>
<dbReference type="EMBL" id="CP000236">
    <property type="protein sequence ID" value="ABD44675.1"/>
    <property type="molecule type" value="Genomic_DNA"/>
</dbReference>
<dbReference type="RefSeq" id="WP_011452915.1">
    <property type="nucleotide sequence ID" value="NC_007799.1"/>
</dbReference>
<dbReference type="SMR" id="Q2GFP4"/>
<dbReference type="STRING" id="205920.ECH_0951"/>
<dbReference type="KEGG" id="ech:ECH_0951"/>
<dbReference type="eggNOG" id="COG0086">
    <property type="taxonomic scope" value="Bacteria"/>
</dbReference>
<dbReference type="HOGENOM" id="CLU_000524_3_1_5"/>
<dbReference type="OrthoDB" id="9815296at2"/>
<dbReference type="Proteomes" id="UP000008320">
    <property type="component" value="Chromosome"/>
</dbReference>
<dbReference type="GO" id="GO:0000428">
    <property type="term" value="C:DNA-directed RNA polymerase complex"/>
    <property type="evidence" value="ECO:0007669"/>
    <property type="project" value="UniProtKB-KW"/>
</dbReference>
<dbReference type="GO" id="GO:0003677">
    <property type="term" value="F:DNA binding"/>
    <property type="evidence" value="ECO:0007669"/>
    <property type="project" value="UniProtKB-UniRule"/>
</dbReference>
<dbReference type="GO" id="GO:0003899">
    <property type="term" value="F:DNA-directed RNA polymerase activity"/>
    <property type="evidence" value="ECO:0007669"/>
    <property type="project" value="UniProtKB-UniRule"/>
</dbReference>
<dbReference type="GO" id="GO:0000287">
    <property type="term" value="F:magnesium ion binding"/>
    <property type="evidence" value="ECO:0007669"/>
    <property type="project" value="UniProtKB-UniRule"/>
</dbReference>
<dbReference type="GO" id="GO:0008270">
    <property type="term" value="F:zinc ion binding"/>
    <property type="evidence" value="ECO:0007669"/>
    <property type="project" value="UniProtKB-UniRule"/>
</dbReference>
<dbReference type="GO" id="GO:0006351">
    <property type="term" value="P:DNA-templated transcription"/>
    <property type="evidence" value="ECO:0007669"/>
    <property type="project" value="UniProtKB-UniRule"/>
</dbReference>
<dbReference type="CDD" id="cd02655">
    <property type="entry name" value="RNAP_beta'_C"/>
    <property type="match status" value="1"/>
</dbReference>
<dbReference type="CDD" id="cd01609">
    <property type="entry name" value="RNAP_beta'_N"/>
    <property type="match status" value="1"/>
</dbReference>
<dbReference type="Gene3D" id="1.10.132.30">
    <property type="match status" value="1"/>
</dbReference>
<dbReference type="Gene3D" id="1.10.150.390">
    <property type="match status" value="1"/>
</dbReference>
<dbReference type="Gene3D" id="1.10.1790.20">
    <property type="match status" value="1"/>
</dbReference>
<dbReference type="Gene3D" id="1.10.40.90">
    <property type="match status" value="1"/>
</dbReference>
<dbReference type="Gene3D" id="2.40.40.20">
    <property type="match status" value="1"/>
</dbReference>
<dbReference type="Gene3D" id="2.40.50.100">
    <property type="match status" value="3"/>
</dbReference>
<dbReference type="Gene3D" id="4.10.860.120">
    <property type="entry name" value="RNA polymerase II, clamp domain"/>
    <property type="match status" value="1"/>
</dbReference>
<dbReference type="Gene3D" id="1.10.274.100">
    <property type="entry name" value="RNA polymerase Rpb1, domain 3"/>
    <property type="match status" value="1"/>
</dbReference>
<dbReference type="HAMAP" id="MF_01322">
    <property type="entry name" value="RNApol_bact_RpoC"/>
    <property type="match status" value="1"/>
</dbReference>
<dbReference type="InterPro" id="IPR045867">
    <property type="entry name" value="DNA-dir_RpoC_beta_prime"/>
</dbReference>
<dbReference type="InterPro" id="IPR012754">
    <property type="entry name" value="DNA-dir_RpoC_beta_prime_bact"/>
</dbReference>
<dbReference type="InterPro" id="IPR000722">
    <property type="entry name" value="RNA_pol_asu"/>
</dbReference>
<dbReference type="InterPro" id="IPR006592">
    <property type="entry name" value="RNA_pol_N"/>
</dbReference>
<dbReference type="InterPro" id="IPR007080">
    <property type="entry name" value="RNA_pol_Rpb1_1"/>
</dbReference>
<dbReference type="InterPro" id="IPR007066">
    <property type="entry name" value="RNA_pol_Rpb1_3"/>
</dbReference>
<dbReference type="InterPro" id="IPR042102">
    <property type="entry name" value="RNA_pol_Rpb1_3_sf"/>
</dbReference>
<dbReference type="InterPro" id="IPR007083">
    <property type="entry name" value="RNA_pol_Rpb1_4"/>
</dbReference>
<dbReference type="InterPro" id="IPR007081">
    <property type="entry name" value="RNA_pol_Rpb1_5"/>
</dbReference>
<dbReference type="InterPro" id="IPR044893">
    <property type="entry name" value="RNA_pol_Rpb1_clamp_domain"/>
</dbReference>
<dbReference type="InterPro" id="IPR038120">
    <property type="entry name" value="Rpb1_funnel_sf"/>
</dbReference>
<dbReference type="NCBIfam" id="TIGR02386">
    <property type="entry name" value="rpoC_TIGR"/>
    <property type="match status" value="1"/>
</dbReference>
<dbReference type="PANTHER" id="PTHR19376">
    <property type="entry name" value="DNA-DIRECTED RNA POLYMERASE"/>
    <property type="match status" value="1"/>
</dbReference>
<dbReference type="PANTHER" id="PTHR19376:SF54">
    <property type="entry name" value="DNA-DIRECTED RNA POLYMERASE SUBUNIT BETA"/>
    <property type="match status" value="1"/>
</dbReference>
<dbReference type="Pfam" id="PF04997">
    <property type="entry name" value="RNA_pol_Rpb1_1"/>
    <property type="match status" value="1"/>
</dbReference>
<dbReference type="Pfam" id="PF00623">
    <property type="entry name" value="RNA_pol_Rpb1_2"/>
    <property type="match status" value="2"/>
</dbReference>
<dbReference type="Pfam" id="PF04983">
    <property type="entry name" value="RNA_pol_Rpb1_3"/>
    <property type="match status" value="1"/>
</dbReference>
<dbReference type="Pfam" id="PF05000">
    <property type="entry name" value="RNA_pol_Rpb1_4"/>
    <property type="match status" value="1"/>
</dbReference>
<dbReference type="Pfam" id="PF04998">
    <property type="entry name" value="RNA_pol_Rpb1_5"/>
    <property type="match status" value="1"/>
</dbReference>
<dbReference type="SMART" id="SM00663">
    <property type="entry name" value="RPOLA_N"/>
    <property type="match status" value="1"/>
</dbReference>
<dbReference type="SUPFAM" id="SSF64484">
    <property type="entry name" value="beta and beta-prime subunits of DNA dependent RNA-polymerase"/>
    <property type="match status" value="1"/>
</dbReference>
<sequence length="1410" mass="157690">MKMLDLYGYTSIAQSFDKICISIASPESIRAMSYGEIKDISTTNYRTFKVEKGGLFCPKIFGPVNDDECLCGKYRKKRYRGVVCEKCGVEVTSSKVRRERMGHIELVSPVAHVWFLKSLPSRIGALLDMPLKLIENILYSGDFVVIDPIATPLSKGEVISESAYNQAKDNYGEDSFLALTGAEAIRELLVRLDLHAINANLRVELESTTSEMKRKKIVKRLRIVENFINSGNKPEWMILTVIPILPPDLRPLVSLENGRPAVSDLNHHYRTIINRNNRLGKLLKLNPPAIMIRNEKRMLQEAVDALFDSTRRSYVSNKAGSVGYKKSLSDMLKGKQGRFRQNLLGKRVDYSGRSVIVVGPNLKLHQCGLPKKMALELFKPFICSKLKMYGIVPTVKLANKMIQNEKPEVWDILDEVIHEHPILLNRAPTLHRLGIQAFDPVLIEGKAIQLHPLVCSAFNADFDGDQMAVHIPLSLEAQLEARILMMSTNNILSPSNGKPIIVPSKDIVLGIYYLTLQDQVQSEDEILFFGDFSHVEYALHNKDVHLCSQIKYRMTYCNYDTSDGKPSYYSKIIETTPGRLILWQIFPQHKNLTFDLINQVLTVKEITSIVDLVYRSCGQSETVEFSDKLMSLGFKYASQSGISFGCKDMIIPDTKTMHVDNASEKIKEFAVQYQDGLITRSERYNKVIDEWSKCTDLIAKDMMKAISVYDVESKLNSIYMMAHSGARGSASQMKQLAGMRGLMAKPSGEIIETPIISNFREGLNVFEYFNSTHGARKGLADTALKTANSGYLTRRLVDVAQDCIVVEYDCKTHNGFAIRSVVEGGTVVETLDNIILGRVAAVDVYNPITEELLVKAGELIDEAKVEKIKIAGLDAVKVRSPLTCEAKKGICALCYGRDLAIGDVVSIGEAVGVIAAQSVGEPGTQLTMRTFHVGGTAMRGVETSNLIALLDAKVKLVNSNIVEDKHGNKIVMSRSCEVVLLDSVGNEKMRHNVPYGARLYVDDGQLVKITEKIAEWDPYTMPIITEKTGIIKYMDLIDGVSINEVLDESTGISNRVVVDWKLHLQGANLRPRLVLIDDNDNIITLSNGLEANYFIPIGAVLNVQDGQKVHAGDVITRIPRDSIKTRDITGGLPRVIELFEARRPKEHAIVSDIDGYVEFGKDYYRSKRRIFIKPVSDTLSPVEYLVPKGKHTIVNEGDFVHKGDLLMDGDPDPHDILRVLGVEALANYMISEIQQVYRLQGVRIDNKHIEIILRQMLQKVEIFEPGDTMYLVGENIDMEEVIKTNDNMVKMGKSPAKYAPILQGITRASLDTNSFVSAASFQETTKVLTEAAFSGKEDSLYGLKENVIVGRLIPAGTGFLMNKIKKLSLLNKEDYSMYYNNEYQDSALLQNDNNAFNQELHKDTGNIVDY</sequence>
<proteinExistence type="inferred from homology"/>
<accession>Q2GFP4</accession>
<organism>
    <name type="scientific">Ehrlichia chaffeensis (strain ATCC CRL-10679 / Arkansas)</name>
    <dbReference type="NCBI Taxonomy" id="205920"/>
    <lineage>
        <taxon>Bacteria</taxon>
        <taxon>Pseudomonadati</taxon>
        <taxon>Pseudomonadota</taxon>
        <taxon>Alphaproteobacteria</taxon>
        <taxon>Rickettsiales</taxon>
        <taxon>Anaplasmataceae</taxon>
        <taxon>Ehrlichia</taxon>
    </lineage>
</organism>
<evidence type="ECO:0000255" key="1">
    <source>
        <dbReference type="HAMAP-Rule" id="MF_01322"/>
    </source>
</evidence>
<feature type="chain" id="PRO_0000240801" description="DNA-directed RNA polymerase subunit beta'">
    <location>
        <begin position="1"/>
        <end position="1410"/>
    </location>
</feature>
<feature type="binding site" evidence="1">
    <location>
        <position position="69"/>
    </location>
    <ligand>
        <name>Zn(2+)</name>
        <dbReference type="ChEBI" id="CHEBI:29105"/>
        <label>1</label>
    </ligand>
</feature>
<feature type="binding site" evidence="1">
    <location>
        <position position="71"/>
    </location>
    <ligand>
        <name>Zn(2+)</name>
        <dbReference type="ChEBI" id="CHEBI:29105"/>
        <label>1</label>
    </ligand>
</feature>
<feature type="binding site" evidence="1">
    <location>
        <position position="84"/>
    </location>
    <ligand>
        <name>Zn(2+)</name>
        <dbReference type="ChEBI" id="CHEBI:29105"/>
        <label>1</label>
    </ligand>
</feature>
<feature type="binding site" evidence="1">
    <location>
        <position position="87"/>
    </location>
    <ligand>
        <name>Zn(2+)</name>
        <dbReference type="ChEBI" id="CHEBI:29105"/>
        <label>1</label>
    </ligand>
</feature>
<feature type="binding site" evidence="1">
    <location>
        <position position="461"/>
    </location>
    <ligand>
        <name>Mg(2+)</name>
        <dbReference type="ChEBI" id="CHEBI:18420"/>
    </ligand>
</feature>
<feature type="binding site" evidence="1">
    <location>
        <position position="463"/>
    </location>
    <ligand>
        <name>Mg(2+)</name>
        <dbReference type="ChEBI" id="CHEBI:18420"/>
    </ligand>
</feature>
<feature type="binding site" evidence="1">
    <location>
        <position position="465"/>
    </location>
    <ligand>
        <name>Mg(2+)</name>
        <dbReference type="ChEBI" id="CHEBI:18420"/>
    </ligand>
</feature>
<feature type="binding site" evidence="1">
    <location>
        <position position="810"/>
    </location>
    <ligand>
        <name>Zn(2+)</name>
        <dbReference type="ChEBI" id="CHEBI:29105"/>
        <label>2</label>
    </ligand>
</feature>
<feature type="binding site" evidence="1">
    <location>
        <position position="884"/>
    </location>
    <ligand>
        <name>Zn(2+)</name>
        <dbReference type="ChEBI" id="CHEBI:29105"/>
        <label>2</label>
    </ligand>
</feature>
<feature type="binding site" evidence="1">
    <location>
        <position position="891"/>
    </location>
    <ligand>
        <name>Zn(2+)</name>
        <dbReference type="ChEBI" id="CHEBI:29105"/>
        <label>2</label>
    </ligand>
</feature>
<feature type="binding site" evidence="1">
    <location>
        <position position="894"/>
    </location>
    <ligand>
        <name>Zn(2+)</name>
        <dbReference type="ChEBI" id="CHEBI:29105"/>
        <label>2</label>
    </ligand>
</feature>
<comment type="function">
    <text evidence="1">DNA-dependent RNA polymerase catalyzes the transcription of DNA into RNA using the four ribonucleoside triphosphates as substrates.</text>
</comment>
<comment type="catalytic activity">
    <reaction evidence="1">
        <text>RNA(n) + a ribonucleoside 5'-triphosphate = RNA(n+1) + diphosphate</text>
        <dbReference type="Rhea" id="RHEA:21248"/>
        <dbReference type="Rhea" id="RHEA-COMP:14527"/>
        <dbReference type="Rhea" id="RHEA-COMP:17342"/>
        <dbReference type="ChEBI" id="CHEBI:33019"/>
        <dbReference type="ChEBI" id="CHEBI:61557"/>
        <dbReference type="ChEBI" id="CHEBI:140395"/>
        <dbReference type="EC" id="2.7.7.6"/>
    </reaction>
</comment>
<comment type="cofactor">
    <cofactor evidence="1">
        <name>Mg(2+)</name>
        <dbReference type="ChEBI" id="CHEBI:18420"/>
    </cofactor>
    <text evidence="1">Binds 1 Mg(2+) ion per subunit.</text>
</comment>
<comment type="cofactor">
    <cofactor evidence="1">
        <name>Zn(2+)</name>
        <dbReference type="ChEBI" id="CHEBI:29105"/>
    </cofactor>
    <text evidence="1">Binds 2 Zn(2+) ions per subunit.</text>
</comment>
<comment type="subunit">
    <text evidence="1">The RNAP catalytic core consists of 2 alpha, 1 beta, 1 beta' and 1 omega subunit. When a sigma factor is associated with the core the holoenzyme is formed, which can initiate transcription.</text>
</comment>
<comment type="similarity">
    <text evidence="1">Belongs to the RNA polymerase beta' chain family.</text>
</comment>
<reference key="1">
    <citation type="journal article" date="2006" name="PLoS Genet.">
        <title>Comparative genomics of emerging human ehrlichiosis agents.</title>
        <authorList>
            <person name="Dunning Hotopp J.C."/>
            <person name="Lin M."/>
            <person name="Madupu R."/>
            <person name="Crabtree J."/>
            <person name="Angiuoli S.V."/>
            <person name="Eisen J.A."/>
            <person name="Seshadri R."/>
            <person name="Ren Q."/>
            <person name="Wu M."/>
            <person name="Utterback T.R."/>
            <person name="Smith S."/>
            <person name="Lewis M."/>
            <person name="Khouri H."/>
            <person name="Zhang C."/>
            <person name="Niu H."/>
            <person name="Lin Q."/>
            <person name="Ohashi N."/>
            <person name="Zhi N."/>
            <person name="Nelson W.C."/>
            <person name="Brinkac L.M."/>
            <person name="Dodson R.J."/>
            <person name="Rosovitz M.J."/>
            <person name="Sundaram J.P."/>
            <person name="Daugherty S.C."/>
            <person name="Davidsen T."/>
            <person name="Durkin A.S."/>
            <person name="Gwinn M.L."/>
            <person name="Haft D.H."/>
            <person name="Selengut J.D."/>
            <person name="Sullivan S.A."/>
            <person name="Zafar N."/>
            <person name="Zhou L."/>
            <person name="Benahmed F."/>
            <person name="Forberger H."/>
            <person name="Halpin R."/>
            <person name="Mulligan S."/>
            <person name="Robinson J."/>
            <person name="White O."/>
            <person name="Rikihisa Y."/>
            <person name="Tettelin H."/>
        </authorList>
    </citation>
    <scope>NUCLEOTIDE SEQUENCE [LARGE SCALE GENOMIC DNA]</scope>
    <source>
        <strain>ATCC CRL-10679 / Arkansas</strain>
    </source>
</reference>
<name>RPOC_EHRCR</name>